<comment type="function">
    <text evidence="1">Prevents the cell division inhibition by proteins MinC and MinD at internal division sites while permitting inhibition at polar sites. This ensures cell division at the proper site by restricting the formation of a division septum at the midpoint of the long axis of the cell.</text>
</comment>
<comment type="similarity">
    <text evidence="1">Belongs to the MinE family.</text>
</comment>
<evidence type="ECO:0000255" key="1">
    <source>
        <dbReference type="HAMAP-Rule" id="MF_00262"/>
    </source>
</evidence>
<name>MINE_PSESM</name>
<proteinExistence type="inferred from homology"/>
<reference key="1">
    <citation type="journal article" date="2003" name="Proc. Natl. Acad. Sci. U.S.A.">
        <title>The complete genome sequence of the Arabidopsis and tomato pathogen Pseudomonas syringae pv. tomato DC3000.</title>
        <authorList>
            <person name="Buell C.R."/>
            <person name="Joardar V."/>
            <person name="Lindeberg M."/>
            <person name="Selengut J."/>
            <person name="Paulsen I.T."/>
            <person name="Gwinn M.L."/>
            <person name="Dodson R.J."/>
            <person name="DeBoy R.T."/>
            <person name="Durkin A.S."/>
            <person name="Kolonay J.F."/>
            <person name="Madupu R."/>
            <person name="Daugherty S.C."/>
            <person name="Brinkac L.M."/>
            <person name="Beanan M.J."/>
            <person name="Haft D.H."/>
            <person name="Nelson W.C."/>
            <person name="Davidsen T.M."/>
            <person name="Zafar N."/>
            <person name="Zhou L."/>
            <person name="Liu J."/>
            <person name="Yuan Q."/>
            <person name="Khouri H.M."/>
            <person name="Fedorova N.B."/>
            <person name="Tran B."/>
            <person name="Russell D."/>
            <person name="Berry K.J."/>
            <person name="Utterback T.R."/>
            <person name="Van Aken S.E."/>
            <person name="Feldblyum T.V."/>
            <person name="D'Ascenzo M."/>
            <person name="Deng W.-L."/>
            <person name="Ramos A.R."/>
            <person name="Alfano J.R."/>
            <person name="Cartinhour S."/>
            <person name="Chatterjee A.K."/>
            <person name="Delaney T.P."/>
            <person name="Lazarowitz S.G."/>
            <person name="Martin G.B."/>
            <person name="Schneider D.J."/>
            <person name="Tang X."/>
            <person name="Bender C.L."/>
            <person name="White O."/>
            <person name="Fraser C.M."/>
            <person name="Collmer A."/>
        </authorList>
    </citation>
    <scope>NUCLEOTIDE SEQUENCE [LARGE SCALE GENOMIC DNA]</scope>
    <source>
        <strain>ATCC BAA-871 / DC3000</strain>
    </source>
</reference>
<accession>Q87YC6</accession>
<organism>
    <name type="scientific">Pseudomonas syringae pv. tomato (strain ATCC BAA-871 / DC3000)</name>
    <dbReference type="NCBI Taxonomy" id="223283"/>
    <lineage>
        <taxon>Bacteria</taxon>
        <taxon>Pseudomonadati</taxon>
        <taxon>Pseudomonadota</taxon>
        <taxon>Gammaproteobacteria</taxon>
        <taxon>Pseudomonadales</taxon>
        <taxon>Pseudomonadaceae</taxon>
        <taxon>Pseudomonas</taxon>
    </lineage>
</organism>
<gene>
    <name evidence="1" type="primary">minE</name>
    <name type="ordered locus">PSPTO_3874</name>
</gene>
<dbReference type="EMBL" id="AE016853">
    <property type="protein sequence ID" value="AAO57341.1"/>
    <property type="molecule type" value="Genomic_DNA"/>
</dbReference>
<dbReference type="RefSeq" id="NP_793646.1">
    <property type="nucleotide sequence ID" value="NC_004578.1"/>
</dbReference>
<dbReference type="RefSeq" id="WP_002552653.1">
    <property type="nucleotide sequence ID" value="NC_004578.1"/>
</dbReference>
<dbReference type="SMR" id="Q87YC6"/>
<dbReference type="STRING" id="223283.PSPTO_3874"/>
<dbReference type="GeneID" id="96217961"/>
<dbReference type="KEGG" id="pst:PSPTO_3874"/>
<dbReference type="PATRIC" id="fig|223283.9.peg.3972"/>
<dbReference type="eggNOG" id="COG0851">
    <property type="taxonomic scope" value="Bacteria"/>
</dbReference>
<dbReference type="HOGENOM" id="CLU_137929_2_1_6"/>
<dbReference type="OrthoDB" id="9802655at2"/>
<dbReference type="PhylomeDB" id="Q87YC6"/>
<dbReference type="Proteomes" id="UP000002515">
    <property type="component" value="Chromosome"/>
</dbReference>
<dbReference type="GO" id="GO:0051301">
    <property type="term" value="P:cell division"/>
    <property type="evidence" value="ECO:0007669"/>
    <property type="project" value="UniProtKB-KW"/>
</dbReference>
<dbReference type="GO" id="GO:0032955">
    <property type="term" value="P:regulation of division septum assembly"/>
    <property type="evidence" value="ECO:0007669"/>
    <property type="project" value="InterPro"/>
</dbReference>
<dbReference type="FunFam" id="3.30.1070.10:FF:000001">
    <property type="entry name" value="Cell division topological specificity factor"/>
    <property type="match status" value="1"/>
</dbReference>
<dbReference type="Gene3D" id="3.30.1070.10">
    <property type="entry name" value="Cell division topological specificity factor MinE"/>
    <property type="match status" value="1"/>
</dbReference>
<dbReference type="HAMAP" id="MF_00262">
    <property type="entry name" value="MinE"/>
    <property type="match status" value="1"/>
</dbReference>
<dbReference type="InterPro" id="IPR005527">
    <property type="entry name" value="MinE"/>
</dbReference>
<dbReference type="InterPro" id="IPR036707">
    <property type="entry name" value="MinE_sf"/>
</dbReference>
<dbReference type="NCBIfam" id="TIGR01215">
    <property type="entry name" value="minE"/>
    <property type="match status" value="1"/>
</dbReference>
<dbReference type="NCBIfam" id="NF001422">
    <property type="entry name" value="PRK00296.1"/>
    <property type="match status" value="1"/>
</dbReference>
<dbReference type="NCBIfam" id="NF010595">
    <property type="entry name" value="PRK13989.1"/>
    <property type="match status" value="1"/>
</dbReference>
<dbReference type="Pfam" id="PF03776">
    <property type="entry name" value="MinE"/>
    <property type="match status" value="1"/>
</dbReference>
<dbReference type="SUPFAM" id="SSF55229">
    <property type="entry name" value="Cell division protein MinE topological specificity domain"/>
    <property type="match status" value="1"/>
</dbReference>
<keyword id="KW-0131">Cell cycle</keyword>
<keyword id="KW-0132">Cell division</keyword>
<keyword id="KW-1185">Reference proteome</keyword>
<feature type="chain" id="PRO_0000205884" description="Cell division topological specificity factor">
    <location>
        <begin position="1"/>
        <end position="84"/>
    </location>
</feature>
<protein>
    <recommendedName>
        <fullName evidence="1">Cell division topological specificity factor</fullName>
    </recommendedName>
</protein>
<sequence length="84" mass="9676">MNIFDFFRDRKKESTASVAKERLQIIVAHERGQRSTPDYLPALQKELVEVIRKYVNIESDQVQVALESQGSCSILELNITLPDR</sequence>